<comment type="function">
    <text evidence="1">Catalyzes the NADPH-dependent reduction of L-glutamate 5-phosphate into L-glutamate 5-semialdehyde and phosphate. The product spontaneously undergoes cyclization to form 1-pyrroline-5-carboxylate.</text>
</comment>
<comment type="catalytic activity">
    <reaction evidence="1">
        <text>L-glutamate 5-semialdehyde + phosphate + NADP(+) = L-glutamyl 5-phosphate + NADPH + H(+)</text>
        <dbReference type="Rhea" id="RHEA:19541"/>
        <dbReference type="ChEBI" id="CHEBI:15378"/>
        <dbReference type="ChEBI" id="CHEBI:43474"/>
        <dbReference type="ChEBI" id="CHEBI:57783"/>
        <dbReference type="ChEBI" id="CHEBI:58066"/>
        <dbReference type="ChEBI" id="CHEBI:58274"/>
        <dbReference type="ChEBI" id="CHEBI:58349"/>
        <dbReference type="EC" id="1.2.1.41"/>
    </reaction>
</comment>
<comment type="pathway">
    <text evidence="1">Amino-acid biosynthesis; L-proline biosynthesis; L-glutamate 5-semialdehyde from L-glutamate: step 2/2.</text>
</comment>
<comment type="subcellular location">
    <subcellularLocation>
        <location evidence="1">Cytoplasm</location>
    </subcellularLocation>
</comment>
<comment type="similarity">
    <text evidence="1">Belongs to the gamma-glutamyl phosphate reductase family.</text>
</comment>
<comment type="sequence caution" evidence="2">
    <conflict type="erroneous initiation">
        <sequence resource="EMBL-CDS" id="ABB07344"/>
    </conflict>
</comment>
<gene>
    <name evidence="1" type="primary">proA</name>
    <name type="ordered locus">Bcep18194_A3743</name>
</gene>
<dbReference type="EC" id="1.2.1.41" evidence="1"/>
<dbReference type="EMBL" id="CP000151">
    <property type="protein sequence ID" value="ABB07344.1"/>
    <property type="status" value="ALT_INIT"/>
    <property type="molecule type" value="Genomic_DNA"/>
</dbReference>
<dbReference type="RefSeq" id="WP_011350934.1">
    <property type="nucleotide sequence ID" value="NC_007510.1"/>
</dbReference>
<dbReference type="SMR" id="Q39JM2"/>
<dbReference type="GeneID" id="45093657"/>
<dbReference type="KEGG" id="bur:Bcep18194_A3743"/>
<dbReference type="PATRIC" id="fig|482957.22.peg.600"/>
<dbReference type="HOGENOM" id="CLU_030231_0_0_4"/>
<dbReference type="UniPathway" id="UPA00098">
    <property type="reaction ID" value="UER00360"/>
</dbReference>
<dbReference type="Proteomes" id="UP000002705">
    <property type="component" value="Chromosome 1"/>
</dbReference>
<dbReference type="GO" id="GO:0005737">
    <property type="term" value="C:cytoplasm"/>
    <property type="evidence" value="ECO:0007669"/>
    <property type="project" value="UniProtKB-SubCell"/>
</dbReference>
<dbReference type="GO" id="GO:0004350">
    <property type="term" value="F:glutamate-5-semialdehyde dehydrogenase activity"/>
    <property type="evidence" value="ECO:0007669"/>
    <property type="project" value="UniProtKB-UniRule"/>
</dbReference>
<dbReference type="GO" id="GO:0050661">
    <property type="term" value="F:NADP binding"/>
    <property type="evidence" value="ECO:0007669"/>
    <property type="project" value="InterPro"/>
</dbReference>
<dbReference type="GO" id="GO:0055129">
    <property type="term" value="P:L-proline biosynthetic process"/>
    <property type="evidence" value="ECO:0007669"/>
    <property type="project" value="UniProtKB-UniRule"/>
</dbReference>
<dbReference type="CDD" id="cd07079">
    <property type="entry name" value="ALDH_F18-19_ProA-GPR"/>
    <property type="match status" value="1"/>
</dbReference>
<dbReference type="FunFam" id="3.40.309.10:FF:000006">
    <property type="entry name" value="Gamma-glutamyl phosphate reductase"/>
    <property type="match status" value="1"/>
</dbReference>
<dbReference type="Gene3D" id="3.40.605.10">
    <property type="entry name" value="Aldehyde Dehydrogenase, Chain A, domain 1"/>
    <property type="match status" value="1"/>
</dbReference>
<dbReference type="Gene3D" id="3.40.309.10">
    <property type="entry name" value="Aldehyde Dehydrogenase, Chain A, domain 2"/>
    <property type="match status" value="1"/>
</dbReference>
<dbReference type="HAMAP" id="MF_00412">
    <property type="entry name" value="ProA"/>
    <property type="match status" value="1"/>
</dbReference>
<dbReference type="InterPro" id="IPR016161">
    <property type="entry name" value="Ald_DH/histidinol_DH"/>
</dbReference>
<dbReference type="InterPro" id="IPR016163">
    <property type="entry name" value="Ald_DH_C"/>
</dbReference>
<dbReference type="InterPro" id="IPR016162">
    <property type="entry name" value="Ald_DH_N"/>
</dbReference>
<dbReference type="InterPro" id="IPR015590">
    <property type="entry name" value="Aldehyde_DH_dom"/>
</dbReference>
<dbReference type="InterPro" id="IPR020593">
    <property type="entry name" value="G-glutamylP_reductase_CS"/>
</dbReference>
<dbReference type="InterPro" id="IPR012134">
    <property type="entry name" value="Glu-5-SA_DH"/>
</dbReference>
<dbReference type="InterPro" id="IPR000965">
    <property type="entry name" value="GPR_dom"/>
</dbReference>
<dbReference type="NCBIfam" id="NF001221">
    <property type="entry name" value="PRK00197.1"/>
    <property type="match status" value="1"/>
</dbReference>
<dbReference type="NCBIfam" id="TIGR00407">
    <property type="entry name" value="proA"/>
    <property type="match status" value="1"/>
</dbReference>
<dbReference type="PANTHER" id="PTHR11063:SF8">
    <property type="entry name" value="DELTA-1-PYRROLINE-5-CARBOXYLATE SYNTHASE"/>
    <property type="match status" value="1"/>
</dbReference>
<dbReference type="PANTHER" id="PTHR11063">
    <property type="entry name" value="GLUTAMATE SEMIALDEHYDE DEHYDROGENASE"/>
    <property type="match status" value="1"/>
</dbReference>
<dbReference type="Pfam" id="PF00171">
    <property type="entry name" value="Aldedh"/>
    <property type="match status" value="2"/>
</dbReference>
<dbReference type="PIRSF" id="PIRSF000151">
    <property type="entry name" value="GPR"/>
    <property type="match status" value="1"/>
</dbReference>
<dbReference type="SUPFAM" id="SSF53720">
    <property type="entry name" value="ALDH-like"/>
    <property type="match status" value="1"/>
</dbReference>
<dbReference type="PROSITE" id="PS01223">
    <property type="entry name" value="PROA"/>
    <property type="match status" value="1"/>
</dbReference>
<keyword id="KW-0028">Amino-acid biosynthesis</keyword>
<keyword id="KW-0963">Cytoplasm</keyword>
<keyword id="KW-0521">NADP</keyword>
<keyword id="KW-0560">Oxidoreductase</keyword>
<keyword id="KW-0641">Proline biosynthesis</keyword>
<organism>
    <name type="scientific">Burkholderia lata (strain ATCC 17760 / DSM 23089 / LMG 22485 / NCIMB 9086 / R18194 / 383)</name>
    <dbReference type="NCBI Taxonomy" id="482957"/>
    <lineage>
        <taxon>Bacteria</taxon>
        <taxon>Pseudomonadati</taxon>
        <taxon>Pseudomonadota</taxon>
        <taxon>Betaproteobacteria</taxon>
        <taxon>Burkholderiales</taxon>
        <taxon>Burkholderiaceae</taxon>
        <taxon>Burkholderia</taxon>
        <taxon>Burkholderia cepacia complex</taxon>
    </lineage>
</organism>
<proteinExistence type="inferred from homology"/>
<sequence length="423" mass="45279">MDIDQYMTDLGRRARHASRAMARASTAAKNAALDAVARAIERDAQVLKDANARDVARAREKGLDAAFVDRLTLSDKALNTMVEGLRQVASLADPIGEISNLKYRPSGIQVGQMRVPLGVIGIIYESRPNVTIDAAALCLKSGNATILRGGSEALESNTALAKLIGEGLEAAGLPQDAVQVVATADRAAVGKLITMTEYVDVIVPRGGKSLIERLINEARVPMIKHLDGICHVYVDDRADLAKALTVCDNAKTHRYGTCNTMETLLVSSGVAAKLLPPLGKLYRDKQVELRVDAAARTVLADAGVGPLVDATEEDWHTEYLAPVLAIKVVDGLDAAIEHINHYGSHHTDAIVTEDHDRAMRFLREVDSASVMVNASTRFADGFEFGLGAEIGISNDKLHARGPVGLEGLTSLKYVVLGHGEGRQ</sequence>
<feature type="chain" id="PRO_0000229995" description="Gamma-glutamyl phosphate reductase">
    <location>
        <begin position="1"/>
        <end position="423"/>
    </location>
</feature>
<evidence type="ECO:0000255" key="1">
    <source>
        <dbReference type="HAMAP-Rule" id="MF_00412"/>
    </source>
</evidence>
<evidence type="ECO:0000305" key="2"/>
<reference key="1">
    <citation type="submission" date="2005-10" db="EMBL/GenBank/DDBJ databases">
        <title>Complete sequence of chromosome 1 of Burkholderia sp. 383.</title>
        <authorList>
            <consortium name="US DOE Joint Genome Institute"/>
            <person name="Copeland A."/>
            <person name="Lucas S."/>
            <person name="Lapidus A."/>
            <person name="Barry K."/>
            <person name="Detter J.C."/>
            <person name="Glavina T."/>
            <person name="Hammon N."/>
            <person name="Israni S."/>
            <person name="Pitluck S."/>
            <person name="Chain P."/>
            <person name="Malfatti S."/>
            <person name="Shin M."/>
            <person name="Vergez L."/>
            <person name="Schmutz J."/>
            <person name="Larimer F."/>
            <person name="Land M."/>
            <person name="Kyrpides N."/>
            <person name="Lykidis A."/>
            <person name="Richardson P."/>
        </authorList>
    </citation>
    <scope>NUCLEOTIDE SEQUENCE [LARGE SCALE GENOMIC DNA]</scope>
    <source>
        <strain>ATCC 17760 / DSM 23089 / LMG 22485 / NCIMB 9086 / R18194 / 383</strain>
    </source>
</reference>
<name>PROA_BURL3</name>
<accession>Q39JM2</accession>
<protein>
    <recommendedName>
        <fullName evidence="1">Gamma-glutamyl phosphate reductase</fullName>
        <shortName evidence="1">GPR</shortName>
        <ecNumber evidence="1">1.2.1.41</ecNumber>
    </recommendedName>
    <alternativeName>
        <fullName evidence="1">Glutamate-5-semialdehyde dehydrogenase</fullName>
    </alternativeName>
    <alternativeName>
        <fullName evidence="1">Glutamyl-gamma-semialdehyde dehydrogenase</fullName>
        <shortName evidence="1">GSA dehydrogenase</shortName>
    </alternativeName>
</protein>